<keyword id="KW-0066">ATP synthesis</keyword>
<keyword id="KW-0997">Cell inner membrane</keyword>
<keyword id="KW-1003">Cell membrane</keyword>
<keyword id="KW-0138">CF(0)</keyword>
<keyword id="KW-0375">Hydrogen ion transport</keyword>
<keyword id="KW-0406">Ion transport</keyword>
<keyword id="KW-0472">Membrane</keyword>
<keyword id="KW-1185">Reference proteome</keyword>
<keyword id="KW-0812">Transmembrane</keyword>
<keyword id="KW-1133">Transmembrane helix</keyword>
<keyword id="KW-0813">Transport</keyword>
<proteinExistence type="inferred from homology"/>
<gene>
    <name evidence="1" type="primary">atpB</name>
    <name type="ordered locus">RHE_CH00864</name>
</gene>
<comment type="function">
    <text evidence="1">Key component of the proton channel; it plays a direct role in the translocation of protons across the membrane.</text>
</comment>
<comment type="subunit">
    <text evidence="1">F-type ATPases have 2 components, CF(1) - the catalytic core - and CF(0) - the membrane proton channel. CF(1) has five subunits: alpha(3), beta(3), gamma(1), delta(1), epsilon(1). CF(0) has three main subunits: a(1), b(2) and c(9-12). The alpha and beta chains form an alternating ring which encloses part of the gamma chain. CF(1) is attached to CF(0) by a central stalk formed by the gamma and epsilon chains, while a peripheral stalk is formed by the delta and b chains.</text>
</comment>
<comment type="subcellular location">
    <subcellularLocation>
        <location evidence="1">Cell inner membrane</location>
        <topology evidence="1">Multi-pass membrane protein</topology>
    </subcellularLocation>
</comment>
<comment type="similarity">
    <text evidence="1">Belongs to the ATPase A chain family.</text>
</comment>
<organism>
    <name type="scientific">Rhizobium etli (strain ATCC 51251 / DSM 11541 / JCM 21823 / NBRC 15573 / CFN 42)</name>
    <dbReference type="NCBI Taxonomy" id="347834"/>
    <lineage>
        <taxon>Bacteria</taxon>
        <taxon>Pseudomonadati</taxon>
        <taxon>Pseudomonadota</taxon>
        <taxon>Alphaproteobacteria</taxon>
        <taxon>Hyphomicrobiales</taxon>
        <taxon>Rhizobiaceae</taxon>
        <taxon>Rhizobium/Agrobacterium group</taxon>
        <taxon>Rhizobium</taxon>
    </lineage>
</organism>
<reference key="1">
    <citation type="journal article" date="2006" name="Proc. Natl. Acad. Sci. U.S.A.">
        <title>The partitioned Rhizobium etli genome: genetic and metabolic redundancy in seven interacting replicons.</title>
        <authorList>
            <person name="Gonzalez V."/>
            <person name="Santamaria R.I."/>
            <person name="Bustos P."/>
            <person name="Hernandez-Gonzalez I."/>
            <person name="Medrano-Soto A."/>
            <person name="Moreno-Hagelsieb G."/>
            <person name="Janga S.C."/>
            <person name="Ramirez M.A."/>
            <person name="Jimenez-Jacinto V."/>
            <person name="Collado-Vides J."/>
            <person name="Davila G."/>
        </authorList>
    </citation>
    <scope>NUCLEOTIDE SEQUENCE [LARGE SCALE GENOMIC DNA]</scope>
    <source>
        <strain>ATCC 51251 / DSM 11541 / JCM 21823 / NBRC 15573 / CFN 42</strain>
    </source>
</reference>
<accession>Q2KBW1</accession>
<name>ATP6_RHIEC</name>
<evidence type="ECO:0000255" key="1">
    <source>
        <dbReference type="HAMAP-Rule" id="MF_01393"/>
    </source>
</evidence>
<dbReference type="EMBL" id="CP000133">
    <property type="protein sequence ID" value="ABC89675.1"/>
    <property type="molecule type" value="Genomic_DNA"/>
</dbReference>
<dbReference type="RefSeq" id="WP_011424213.1">
    <property type="nucleotide sequence ID" value="NC_007761.1"/>
</dbReference>
<dbReference type="SMR" id="Q2KBW1"/>
<dbReference type="KEGG" id="ret:RHE_CH00864"/>
<dbReference type="eggNOG" id="COG0356">
    <property type="taxonomic scope" value="Bacteria"/>
</dbReference>
<dbReference type="HOGENOM" id="CLU_041018_0_2_5"/>
<dbReference type="OrthoDB" id="9809130at2"/>
<dbReference type="Proteomes" id="UP000001936">
    <property type="component" value="Chromosome"/>
</dbReference>
<dbReference type="GO" id="GO:0005886">
    <property type="term" value="C:plasma membrane"/>
    <property type="evidence" value="ECO:0007669"/>
    <property type="project" value="UniProtKB-SubCell"/>
</dbReference>
<dbReference type="GO" id="GO:0045259">
    <property type="term" value="C:proton-transporting ATP synthase complex"/>
    <property type="evidence" value="ECO:0007669"/>
    <property type="project" value="UniProtKB-KW"/>
</dbReference>
<dbReference type="GO" id="GO:0046933">
    <property type="term" value="F:proton-transporting ATP synthase activity, rotational mechanism"/>
    <property type="evidence" value="ECO:0007669"/>
    <property type="project" value="UniProtKB-UniRule"/>
</dbReference>
<dbReference type="CDD" id="cd00310">
    <property type="entry name" value="ATP-synt_Fo_a_6"/>
    <property type="match status" value="1"/>
</dbReference>
<dbReference type="FunFam" id="1.20.120.220:FF:000003">
    <property type="entry name" value="ATP synthase subunit a"/>
    <property type="match status" value="1"/>
</dbReference>
<dbReference type="Gene3D" id="1.20.120.220">
    <property type="entry name" value="ATP synthase, F0 complex, subunit A"/>
    <property type="match status" value="1"/>
</dbReference>
<dbReference type="HAMAP" id="MF_01393">
    <property type="entry name" value="ATP_synth_a_bact"/>
    <property type="match status" value="1"/>
</dbReference>
<dbReference type="InterPro" id="IPR000568">
    <property type="entry name" value="ATP_synth_F0_asu"/>
</dbReference>
<dbReference type="InterPro" id="IPR023011">
    <property type="entry name" value="ATP_synth_F0_asu_AS"/>
</dbReference>
<dbReference type="InterPro" id="IPR045083">
    <property type="entry name" value="ATP_synth_F0_asu_bact/mt"/>
</dbReference>
<dbReference type="InterPro" id="IPR035908">
    <property type="entry name" value="F0_ATP_A_sf"/>
</dbReference>
<dbReference type="NCBIfam" id="TIGR01131">
    <property type="entry name" value="ATP_synt_6_or_A"/>
    <property type="match status" value="1"/>
</dbReference>
<dbReference type="NCBIfam" id="NF004482">
    <property type="entry name" value="PRK05815.2-4"/>
    <property type="match status" value="1"/>
</dbReference>
<dbReference type="PANTHER" id="PTHR11410">
    <property type="entry name" value="ATP SYNTHASE SUBUNIT A"/>
    <property type="match status" value="1"/>
</dbReference>
<dbReference type="PANTHER" id="PTHR11410:SF0">
    <property type="entry name" value="ATP SYNTHASE SUBUNIT A"/>
    <property type="match status" value="1"/>
</dbReference>
<dbReference type="Pfam" id="PF00119">
    <property type="entry name" value="ATP-synt_A"/>
    <property type="match status" value="1"/>
</dbReference>
<dbReference type="PRINTS" id="PR00123">
    <property type="entry name" value="ATPASEA"/>
</dbReference>
<dbReference type="SUPFAM" id="SSF81336">
    <property type="entry name" value="F1F0 ATP synthase subunit A"/>
    <property type="match status" value="1"/>
</dbReference>
<dbReference type="PROSITE" id="PS00449">
    <property type="entry name" value="ATPASE_A"/>
    <property type="match status" value="1"/>
</dbReference>
<protein>
    <recommendedName>
        <fullName evidence="1">ATP synthase subunit a</fullName>
    </recommendedName>
    <alternativeName>
        <fullName evidence="1">ATP synthase F0 sector subunit a</fullName>
    </alternativeName>
    <alternativeName>
        <fullName evidence="1">F-ATPase subunit 6</fullName>
    </alternativeName>
</protein>
<feature type="chain" id="PRO_0000362408" description="ATP synthase subunit a">
    <location>
        <begin position="1"/>
        <end position="250"/>
    </location>
</feature>
<feature type="transmembrane region" description="Helical" evidence="1">
    <location>
        <begin position="26"/>
        <end position="46"/>
    </location>
</feature>
<feature type="transmembrane region" description="Helical" evidence="1">
    <location>
        <begin position="84"/>
        <end position="104"/>
    </location>
</feature>
<feature type="transmembrane region" description="Helical" evidence="1">
    <location>
        <begin position="114"/>
        <end position="134"/>
    </location>
</feature>
<feature type="transmembrane region" description="Helical" evidence="1">
    <location>
        <begin position="143"/>
        <end position="163"/>
    </location>
</feature>
<feature type="transmembrane region" description="Helical" evidence="1">
    <location>
        <begin position="193"/>
        <end position="213"/>
    </location>
</feature>
<feature type="transmembrane region" description="Helical" evidence="1">
    <location>
        <begin position="216"/>
        <end position="236"/>
    </location>
</feature>
<sequence>MSNDPTHQFLIQKIVPIEIGGIDFSFTNASLFMAASAAVAAGFLYFSTSNRAIVPGRSQSVAEMSYEFIANMLKEGAGKQGLKFFPLVFSLFMFVLTANLLGMFPYFFTITSQIIVTFALAILVISTVLIYGFYKHGFHFLNVFVPSGVPGILLPLVVAIEIISFLSRPISLSVRLFANMLAGHITLKVFAGFVASLGALGAVGVGGAVLPLIMTVALTGLEFLVAFLQAYVFAVLTCMYLNDAIHPGGH</sequence>